<proteinExistence type="inferred from homology"/>
<evidence type="ECO:0000255" key="1">
    <source>
        <dbReference type="HAMAP-Rule" id="MF_00340"/>
    </source>
</evidence>
<evidence type="ECO:0000256" key="2">
    <source>
        <dbReference type="SAM" id="MobiDB-lite"/>
    </source>
</evidence>
<evidence type="ECO:0000305" key="3"/>
<name>RL32_CLAM3</name>
<comment type="similarity">
    <text evidence="1">Belongs to the bacterial ribosomal protein bL32 family.</text>
</comment>
<protein>
    <recommendedName>
        <fullName evidence="1">Large ribosomal subunit protein bL32</fullName>
    </recommendedName>
    <alternativeName>
        <fullName evidence="3">50S ribosomal protein L32</fullName>
    </alternativeName>
</protein>
<sequence length="67" mass="7619">MAVPKRKMSRSNTRARRSQWKAEAPTLVKTIENGKVVYSMPHRARVVEDAAGTPLYMEYKGRKVADV</sequence>
<organism>
    <name type="scientific">Clavibacter michiganensis subsp. michiganensis (strain NCPPB 382)</name>
    <dbReference type="NCBI Taxonomy" id="443906"/>
    <lineage>
        <taxon>Bacteria</taxon>
        <taxon>Bacillati</taxon>
        <taxon>Actinomycetota</taxon>
        <taxon>Actinomycetes</taxon>
        <taxon>Micrococcales</taxon>
        <taxon>Microbacteriaceae</taxon>
        <taxon>Clavibacter</taxon>
    </lineage>
</organism>
<reference key="1">
    <citation type="journal article" date="2008" name="J. Bacteriol.">
        <title>The genome sequence of the tomato-pathogenic actinomycete Clavibacter michiganensis subsp. michiganensis NCPPB382 reveals a large island involved in pathogenicity.</title>
        <authorList>
            <person name="Gartemann K.-H."/>
            <person name="Abt B."/>
            <person name="Bekel T."/>
            <person name="Burger A."/>
            <person name="Engemann J."/>
            <person name="Fluegel M."/>
            <person name="Gaigalat L."/>
            <person name="Goesmann A."/>
            <person name="Graefen I."/>
            <person name="Kalinowski J."/>
            <person name="Kaup O."/>
            <person name="Kirchner O."/>
            <person name="Krause L."/>
            <person name="Linke B."/>
            <person name="McHardy A."/>
            <person name="Meyer F."/>
            <person name="Pohle S."/>
            <person name="Rueckert C."/>
            <person name="Schneiker S."/>
            <person name="Zellermann E.-M."/>
            <person name="Puehler A."/>
            <person name="Eichenlaub R."/>
            <person name="Kaiser O."/>
            <person name="Bartels D."/>
        </authorList>
    </citation>
    <scope>NUCLEOTIDE SEQUENCE [LARGE SCALE GENOMIC DNA]</scope>
    <source>
        <strain>NCPPB 382</strain>
    </source>
</reference>
<dbReference type="EMBL" id="AM711867">
    <property type="protein sequence ID" value="CAN01402.1"/>
    <property type="molecule type" value="Genomic_DNA"/>
</dbReference>
<dbReference type="RefSeq" id="WP_012038043.1">
    <property type="nucleotide sequence ID" value="NC_009480.1"/>
</dbReference>
<dbReference type="SMR" id="A5CQP8"/>
<dbReference type="GeneID" id="92947328"/>
<dbReference type="KEGG" id="cmi:CMM_1357"/>
<dbReference type="eggNOG" id="COG0333">
    <property type="taxonomic scope" value="Bacteria"/>
</dbReference>
<dbReference type="HOGENOM" id="CLU_2805252_0_0_11"/>
<dbReference type="OrthoDB" id="9807363at2"/>
<dbReference type="Proteomes" id="UP000001564">
    <property type="component" value="Chromosome"/>
</dbReference>
<dbReference type="GO" id="GO:0015934">
    <property type="term" value="C:large ribosomal subunit"/>
    <property type="evidence" value="ECO:0007669"/>
    <property type="project" value="InterPro"/>
</dbReference>
<dbReference type="GO" id="GO:0003735">
    <property type="term" value="F:structural constituent of ribosome"/>
    <property type="evidence" value="ECO:0007669"/>
    <property type="project" value="InterPro"/>
</dbReference>
<dbReference type="GO" id="GO:0006412">
    <property type="term" value="P:translation"/>
    <property type="evidence" value="ECO:0007669"/>
    <property type="project" value="UniProtKB-UniRule"/>
</dbReference>
<dbReference type="HAMAP" id="MF_00340">
    <property type="entry name" value="Ribosomal_bL32"/>
    <property type="match status" value="1"/>
</dbReference>
<dbReference type="InterPro" id="IPR002677">
    <property type="entry name" value="Ribosomal_bL32"/>
</dbReference>
<dbReference type="InterPro" id="IPR011332">
    <property type="entry name" value="Ribosomal_zn-bd"/>
</dbReference>
<dbReference type="NCBIfam" id="TIGR01031">
    <property type="entry name" value="rpmF_bact"/>
    <property type="match status" value="1"/>
</dbReference>
<dbReference type="Pfam" id="PF01783">
    <property type="entry name" value="Ribosomal_L32p"/>
    <property type="match status" value="1"/>
</dbReference>
<dbReference type="SUPFAM" id="SSF57829">
    <property type="entry name" value="Zn-binding ribosomal proteins"/>
    <property type="match status" value="1"/>
</dbReference>
<keyword id="KW-0687">Ribonucleoprotein</keyword>
<keyword id="KW-0689">Ribosomal protein</keyword>
<feature type="chain" id="PRO_1000005056" description="Large ribosomal subunit protein bL32">
    <location>
        <begin position="1"/>
        <end position="67"/>
    </location>
</feature>
<feature type="region of interest" description="Disordered" evidence="2">
    <location>
        <begin position="1"/>
        <end position="21"/>
    </location>
</feature>
<feature type="compositionally biased region" description="Basic residues" evidence="2">
    <location>
        <begin position="1"/>
        <end position="19"/>
    </location>
</feature>
<accession>A5CQP8</accession>
<gene>
    <name evidence="1" type="primary">rpmF</name>
    <name type="ordered locus">CMM_1357</name>
</gene>